<gene>
    <name evidence="1" type="primary">pckG</name>
    <name type="ordered locus">Lxx04240</name>
</gene>
<keyword id="KW-0963">Cytoplasm</keyword>
<keyword id="KW-0210">Decarboxylase</keyword>
<keyword id="KW-0312">Gluconeogenesis</keyword>
<keyword id="KW-0342">GTP-binding</keyword>
<keyword id="KW-0456">Lyase</keyword>
<keyword id="KW-0464">Manganese</keyword>
<keyword id="KW-0479">Metal-binding</keyword>
<keyword id="KW-0547">Nucleotide-binding</keyword>
<keyword id="KW-1185">Reference proteome</keyword>
<proteinExistence type="inferred from homology"/>
<protein>
    <recommendedName>
        <fullName evidence="1">Phosphoenolpyruvate carboxykinase [GTP]</fullName>
        <shortName evidence="1">PEP carboxykinase</shortName>
        <shortName evidence="1">PEPCK</shortName>
        <ecNumber evidence="1">4.1.1.32</ecNumber>
    </recommendedName>
</protein>
<accession>Q6AGS4</accession>
<organism>
    <name type="scientific">Leifsonia xyli subsp. xyli (strain CTCB07)</name>
    <dbReference type="NCBI Taxonomy" id="281090"/>
    <lineage>
        <taxon>Bacteria</taxon>
        <taxon>Bacillati</taxon>
        <taxon>Actinomycetota</taxon>
        <taxon>Actinomycetes</taxon>
        <taxon>Micrococcales</taxon>
        <taxon>Microbacteriaceae</taxon>
        <taxon>Leifsonia</taxon>
    </lineage>
</organism>
<reference key="1">
    <citation type="journal article" date="2004" name="Mol. Plant Microbe Interact.">
        <title>The genome sequence of the Gram-positive sugarcane pathogen Leifsonia xyli subsp. xyli.</title>
        <authorList>
            <person name="Monteiro-Vitorello C.B."/>
            <person name="Camargo L.E.A."/>
            <person name="Van Sluys M.A."/>
            <person name="Kitajima J.P."/>
            <person name="Truffi D."/>
            <person name="do Amaral A.M."/>
            <person name="Harakava R."/>
            <person name="de Oliveira J.C.F."/>
            <person name="Wood D."/>
            <person name="de Oliveira M.C."/>
            <person name="Miyaki C.Y."/>
            <person name="Takita M.A."/>
            <person name="da Silva A.C.R."/>
            <person name="Furlan L.R."/>
            <person name="Carraro D.M."/>
            <person name="Camarotte G."/>
            <person name="Almeida N.F. Jr."/>
            <person name="Carrer H."/>
            <person name="Coutinho L.L."/>
            <person name="El-Dorry H.A."/>
            <person name="Ferro M.I.T."/>
            <person name="Gagliardi P.R."/>
            <person name="Giglioti E."/>
            <person name="Goldman M.H.S."/>
            <person name="Goldman G.H."/>
            <person name="Kimura E.T."/>
            <person name="Ferro E.S."/>
            <person name="Kuramae E.E."/>
            <person name="Lemos E.G.M."/>
            <person name="Lemos M.V.F."/>
            <person name="Mauro S.M.Z."/>
            <person name="Machado M.A."/>
            <person name="Marino C.L."/>
            <person name="Menck C.F."/>
            <person name="Nunes L.R."/>
            <person name="Oliveira R.C."/>
            <person name="Pereira G.G."/>
            <person name="Siqueira W."/>
            <person name="de Souza A.A."/>
            <person name="Tsai S.M."/>
            <person name="Zanca A.S."/>
            <person name="Simpson A.J.G."/>
            <person name="Brumbley S.M."/>
            <person name="Setubal J.C."/>
        </authorList>
    </citation>
    <scope>NUCLEOTIDE SEQUENCE [LARGE SCALE GENOMIC DNA]</scope>
    <source>
        <strain>CTCB07</strain>
    </source>
</reference>
<comment type="function">
    <text evidence="1">Catalyzes the conversion of oxaloacetate (OAA) to phosphoenolpyruvate (PEP), the rate-limiting step in the metabolic pathway that produces glucose from lactate and other precursors derived from the citric acid cycle.</text>
</comment>
<comment type="catalytic activity">
    <reaction evidence="1">
        <text>oxaloacetate + GTP = phosphoenolpyruvate + GDP + CO2</text>
        <dbReference type="Rhea" id="RHEA:10388"/>
        <dbReference type="ChEBI" id="CHEBI:16452"/>
        <dbReference type="ChEBI" id="CHEBI:16526"/>
        <dbReference type="ChEBI" id="CHEBI:37565"/>
        <dbReference type="ChEBI" id="CHEBI:58189"/>
        <dbReference type="ChEBI" id="CHEBI:58702"/>
        <dbReference type="EC" id="4.1.1.32"/>
    </reaction>
</comment>
<comment type="cofactor">
    <cofactor evidence="1">
        <name>Mn(2+)</name>
        <dbReference type="ChEBI" id="CHEBI:29035"/>
    </cofactor>
    <text evidence="1">Binds 1 Mn(2+) ion per subunit.</text>
</comment>
<comment type="pathway">
    <text evidence="1">Carbohydrate biosynthesis; gluconeogenesis.</text>
</comment>
<comment type="subunit">
    <text evidence="1">Monomer.</text>
</comment>
<comment type="subcellular location">
    <subcellularLocation>
        <location evidence="1">Cytoplasm</location>
    </subcellularLocation>
</comment>
<comment type="similarity">
    <text evidence="1">Belongs to the phosphoenolpyruvate carboxykinase [GTP] family.</text>
</comment>
<sequence length="612" mass="66419">MTAPPRPTAPPGAAALTGLAALHAWVDELAALLQPDGIVWCDGSRGQTDRLTKQLVAEGKLIRLNPEWRPNSFLSRTDPSDVARVEDRTFICSLDEADAGPTNNWREPEGMRAELREAFAGSMRGRTLYVVPFSMGPIGGPLSQLGVQLTDSAYVAVSMGIMTRVASAVLDLIAAGQPWVPTVHSVGAPLVDEAGVRQEDVAWPCNPVKYIVQFPETREIWSYGSGYGGNAILAKKCFALRIASVMARDEGWLAEHMLIVKVTSPEGRVFHFAAAFPSSCGKTNLAMLKPSIPGWTVETVCDDIAWLRPGPDGRLRAINPEAGFFGVAPGTGELTNKTAVEALWGNTIFTNVALRDDGDVWWEGLTAEPPAHLIDWEGNDWTPASGRPAAHPNSRFTVSAAQCPVIADEWDVVDGVPIDAILFGGRRATNVPLVAQARDWKHGVFIGATISSEQTAAAEGTVGELRRDPFAMLPFCGYNMADYWAHWLRMGEKLGADAPAIFQVNWFRKGDDGRFLWPGFSENARVIEWIARRVEGSAGAEETAIGRLPLADELDLDGLGLPAEDLAALFDIDTERWLAECALTEQYFARFGPRVPPALTAELASLRDKLRA</sequence>
<dbReference type="EC" id="4.1.1.32" evidence="1"/>
<dbReference type="EMBL" id="AE016822">
    <property type="protein sequence ID" value="AAT88421.1"/>
    <property type="molecule type" value="Genomic_DNA"/>
</dbReference>
<dbReference type="SMR" id="Q6AGS4"/>
<dbReference type="STRING" id="281090.Lxx04240"/>
<dbReference type="KEGG" id="lxx:Lxx04240"/>
<dbReference type="eggNOG" id="COG1274">
    <property type="taxonomic scope" value="Bacteria"/>
</dbReference>
<dbReference type="HOGENOM" id="CLU_028872_1_1_11"/>
<dbReference type="UniPathway" id="UPA00138"/>
<dbReference type="Proteomes" id="UP000001306">
    <property type="component" value="Chromosome"/>
</dbReference>
<dbReference type="GO" id="GO:0005829">
    <property type="term" value="C:cytosol"/>
    <property type="evidence" value="ECO:0007669"/>
    <property type="project" value="TreeGrafter"/>
</dbReference>
<dbReference type="GO" id="GO:0005525">
    <property type="term" value="F:GTP binding"/>
    <property type="evidence" value="ECO:0007669"/>
    <property type="project" value="UniProtKB-UniRule"/>
</dbReference>
<dbReference type="GO" id="GO:0030145">
    <property type="term" value="F:manganese ion binding"/>
    <property type="evidence" value="ECO:0007669"/>
    <property type="project" value="UniProtKB-UniRule"/>
</dbReference>
<dbReference type="GO" id="GO:0004613">
    <property type="term" value="F:phosphoenolpyruvate carboxykinase (GTP) activity"/>
    <property type="evidence" value="ECO:0007669"/>
    <property type="project" value="UniProtKB-UniRule"/>
</dbReference>
<dbReference type="GO" id="GO:0071333">
    <property type="term" value="P:cellular response to glucose stimulus"/>
    <property type="evidence" value="ECO:0007669"/>
    <property type="project" value="TreeGrafter"/>
</dbReference>
<dbReference type="GO" id="GO:0006094">
    <property type="term" value="P:gluconeogenesis"/>
    <property type="evidence" value="ECO:0007669"/>
    <property type="project" value="UniProtKB-UniRule"/>
</dbReference>
<dbReference type="GO" id="GO:0046327">
    <property type="term" value="P:glycerol biosynthetic process from pyruvate"/>
    <property type="evidence" value="ECO:0007669"/>
    <property type="project" value="TreeGrafter"/>
</dbReference>
<dbReference type="GO" id="GO:0006107">
    <property type="term" value="P:oxaloacetate metabolic process"/>
    <property type="evidence" value="ECO:0007669"/>
    <property type="project" value="TreeGrafter"/>
</dbReference>
<dbReference type="GO" id="GO:0019543">
    <property type="term" value="P:propionate catabolic process"/>
    <property type="evidence" value="ECO:0007669"/>
    <property type="project" value="TreeGrafter"/>
</dbReference>
<dbReference type="GO" id="GO:0033993">
    <property type="term" value="P:response to lipid"/>
    <property type="evidence" value="ECO:0007669"/>
    <property type="project" value="TreeGrafter"/>
</dbReference>
<dbReference type="GO" id="GO:0042594">
    <property type="term" value="P:response to starvation"/>
    <property type="evidence" value="ECO:0007669"/>
    <property type="project" value="TreeGrafter"/>
</dbReference>
<dbReference type="CDD" id="cd00819">
    <property type="entry name" value="PEPCK_GTP"/>
    <property type="match status" value="1"/>
</dbReference>
<dbReference type="FunFam" id="3.40.449.10:FF:000005">
    <property type="entry name" value="Phosphoenolpyruvate carboxykinase [GTP]"/>
    <property type="match status" value="1"/>
</dbReference>
<dbReference type="Gene3D" id="3.90.228.20">
    <property type="match status" value="1"/>
</dbReference>
<dbReference type="Gene3D" id="3.40.449.10">
    <property type="entry name" value="Phosphoenolpyruvate Carboxykinase, domain 1"/>
    <property type="match status" value="1"/>
</dbReference>
<dbReference type="Gene3D" id="2.170.8.10">
    <property type="entry name" value="Phosphoenolpyruvate Carboxykinase, domain 2"/>
    <property type="match status" value="1"/>
</dbReference>
<dbReference type="HAMAP" id="MF_00452">
    <property type="entry name" value="PEPCK_GTP"/>
    <property type="match status" value="1"/>
</dbReference>
<dbReference type="InterPro" id="IPR018091">
    <property type="entry name" value="PEP_carboxykin_GTP_CS"/>
</dbReference>
<dbReference type="InterPro" id="IPR013035">
    <property type="entry name" value="PEP_carboxykinase_C"/>
</dbReference>
<dbReference type="InterPro" id="IPR008209">
    <property type="entry name" value="PEP_carboxykinase_GTP"/>
</dbReference>
<dbReference type="InterPro" id="IPR035077">
    <property type="entry name" value="PEP_carboxykinase_GTP_C"/>
</dbReference>
<dbReference type="InterPro" id="IPR035078">
    <property type="entry name" value="PEP_carboxykinase_GTP_N"/>
</dbReference>
<dbReference type="InterPro" id="IPR008210">
    <property type="entry name" value="PEP_carboxykinase_N"/>
</dbReference>
<dbReference type="NCBIfam" id="NF003253">
    <property type="entry name" value="PRK04210.1"/>
    <property type="match status" value="1"/>
</dbReference>
<dbReference type="PANTHER" id="PTHR11561">
    <property type="entry name" value="PHOSPHOENOLPYRUVATE CARBOXYKINASE"/>
    <property type="match status" value="1"/>
</dbReference>
<dbReference type="PANTHER" id="PTHR11561:SF0">
    <property type="entry name" value="PHOSPHOENOLPYRUVATE CARBOXYKINASE [GTP]-RELATED"/>
    <property type="match status" value="1"/>
</dbReference>
<dbReference type="Pfam" id="PF00821">
    <property type="entry name" value="PEPCK_GTP"/>
    <property type="match status" value="1"/>
</dbReference>
<dbReference type="Pfam" id="PF17297">
    <property type="entry name" value="PEPCK_N"/>
    <property type="match status" value="1"/>
</dbReference>
<dbReference type="PIRSF" id="PIRSF001348">
    <property type="entry name" value="PEP_carboxykinase_GTP"/>
    <property type="match status" value="1"/>
</dbReference>
<dbReference type="SUPFAM" id="SSF68923">
    <property type="entry name" value="PEP carboxykinase N-terminal domain"/>
    <property type="match status" value="1"/>
</dbReference>
<dbReference type="SUPFAM" id="SSF53795">
    <property type="entry name" value="PEP carboxykinase-like"/>
    <property type="match status" value="1"/>
</dbReference>
<dbReference type="PROSITE" id="PS00505">
    <property type="entry name" value="PEPCK_GTP"/>
    <property type="match status" value="1"/>
</dbReference>
<evidence type="ECO:0000255" key="1">
    <source>
        <dbReference type="HAMAP-Rule" id="MF_00452"/>
    </source>
</evidence>
<feature type="chain" id="PRO_0000103606" description="Phosphoenolpyruvate carboxykinase [GTP]">
    <location>
        <begin position="1"/>
        <end position="612"/>
    </location>
</feature>
<feature type="active site" evidence="1">
    <location>
        <position position="280"/>
    </location>
</feature>
<feature type="binding site" evidence="1">
    <location>
        <position position="84"/>
    </location>
    <ligand>
        <name>substrate</name>
    </ligand>
</feature>
<feature type="binding site" evidence="1">
    <location>
        <begin position="227"/>
        <end position="229"/>
    </location>
    <ligand>
        <name>substrate</name>
    </ligand>
</feature>
<feature type="binding site" evidence="1">
    <location>
        <position position="236"/>
    </location>
    <ligand>
        <name>Mn(2+)</name>
        <dbReference type="ChEBI" id="CHEBI:29035"/>
    </ligand>
</feature>
<feature type="binding site" evidence="1">
    <location>
        <position position="256"/>
    </location>
    <ligand>
        <name>Mn(2+)</name>
        <dbReference type="ChEBI" id="CHEBI:29035"/>
    </ligand>
</feature>
<feature type="binding site" evidence="1">
    <location>
        <position position="278"/>
    </location>
    <ligand>
        <name>substrate</name>
    </ligand>
</feature>
<feature type="binding site" evidence="1">
    <location>
        <begin position="279"/>
        <end position="284"/>
    </location>
    <ligand>
        <name>GTP</name>
        <dbReference type="ChEBI" id="CHEBI:37565"/>
    </ligand>
</feature>
<feature type="binding site" evidence="1">
    <location>
        <position position="303"/>
    </location>
    <ligand>
        <name>Mn(2+)</name>
        <dbReference type="ChEBI" id="CHEBI:29035"/>
    </ligand>
</feature>
<feature type="binding site" evidence="1">
    <location>
        <begin position="393"/>
        <end position="395"/>
    </location>
    <ligand>
        <name>substrate</name>
    </ligand>
</feature>
<feature type="binding site" evidence="1">
    <location>
        <position position="395"/>
    </location>
    <ligand>
        <name>GTP</name>
        <dbReference type="ChEBI" id="CHEBI:37565"/>
    </ligand>
</feature>
<feature type="binding site" evidence="1">
    <location>
        <position position="426"/>
    </location>
    <ligand>
        <name>GTP</name>
        <dbReference type="ChEBI" id="CHEBI:37565"/>
    </ligand>
</feature>
<feature type="binding site" evidence="1">
    <location>
        <begin position="520"/>
        <end position="523"/>
    </location>
    <ligand>
        <name>GTP</name>
        <dbReference type="ChEBI" id="CHEBI:37565"/>
    </ligand>
</feature>
<name>PCKG_LEIXX</name>